<dbReference type="EMBL" id="AE014075">
    <property type="protein sequence ID" value="AAN78720.1"/>
    <property type="molecule type" value="Genomic_DNA"/>
</dbReference>
<dbReference type="RefSeq" id="WP_000417060.1">
    <property type="nucleotide sequence ID" value="NZ_CP051263.1"/>
</dbReference>
<dbReference type="SMR" id="Q8FKZ8"/>
<dbReference type="STRING" id="199310.c0228"/>
<dbReference type="KEGG" id="ecc:c0228"/>
<dbReference type="eggNOG" id="ENOG5032Z3X">
    <property type="taxonomic scope" value="Bacteria"/>
</dbReference>
<dbReference type="HOGENOM" id="CLU_190008_0_0_6"/>
<dbReference type="BioCyc" id="ECOL199310:C0228-MONOMER"/>
<dbReference type="Proteomes" id="UP000001410">
    <property type="component" value="Chromosome"/>
</dbReference>
<dbReference type="HAMAP" id="MF_01064">
    <property type="entry name" value="UPF0253"/>
    <property type="match status" value="1"/>
</dbReference>
<dbReference type="InterPro" id="IPR009624">
    <property type="entry name" value="UPF0253"/>
</dbReference>
<dbReference type="NCBIfam" id="NF003436">
    <property type="entry name" value="PRK04964.1"/>
    <property type="match status" value="1"/>
</dbReference>
<dbReference type="Pfam" id="PF06786">
    <property type="entry name" value="UPF0253"/>
    <property type="match status" value="1"/>
</dbReference>
<reference key="1">
    <citation type="journal article" date="2002" name="Proc. Natl. Acad. Sci. U.S.A.">
        <title>Extensive mosaic structure revealed by the complete genome sequence of uropathogenic Escherichia coli.</title>
        <authorList>
            <person name="Welch R.A."/>
            <person name="Burland V."/>
            <person name="Plunkett G. III"/>
            <person name="Redford P."/>
            <person name="Roesch P."/>
            <person name="Rasko D."/>
            <person name="Buckles E.L."/>
            <person name="Liou S.-R."/>
            <person name="Boutin A."/>
            <person name="Hackett J."/>
            <person name="Stroud D."/>
            <person name="Mayhew G.F."/>
            <person name="Rose D.J."/>
            <person name="Zhou S."/>
            <person name="Schwartz D.C."/>
            <person name="Perna N.T."/>
            <person name="Mobley H.L.T."/>
            <person name="Donnenberg M.S."/>
            <person name="Blattner F.R."/>
        </authorList>
    </citation>
    <scope>NUCLEOTIDE SEQUENCE [LARGE SCALE GENOMIC DNA]</scope>
    <source>
        <strain>CFT073 / ATCC 700928 / UPEC</strain>
    </source>
</reference>
<feature type="chain" id="PRO_0000215541" description="UPF0253 protein YaeP">
    <location>
        <begin position="1"/>
        <end position="66"/>
    </location>
</feature>
<gene>
    <name evidence="1" type="primary">yaeP</name>
    <name type="ordered locus">c0228</name>
</gene>
<organism>
    <name type="scientific">Escherichia coli O6:H1 (strain CFT073 / ATCC 700928 / UPEC)</name>
    <dbReference type="NCBI Taxonomy" id="199310"/>
    <lineage>
        <taxon>Bacteria</taxon>
        <taxon>Pseudomonadati</taxon>
        <taxon>Pseudomonadota</taxon>
        <taxon>Gammaproteobacteria</taxon>
        <taxon>Enterobacterales</taxon>
        <taxon>Enterobacteriaceae</taxon>
        <taxon>Escherichia</taxon>
    </lineage>
</organism>
<evidence type="ECO:0000255" key="1">
    <source>
        <dbReference type="HAMAP-Rule" id="MF_01064"/>
    </source>
</evidence>
<accession>Q8FKZ8</accession>
<name>YAEP_ECOL6</name>
<sequence>MEKYCELIRKRYAEIASGDLGYVPDALGCVLKVLNEMAADDTLSEAVREKAAYAAANLLVSDYVNE</sequence>
<keyword id="KW-1185">Reference proteome</keyword>
<protein>
    <recommendedName>
        <fullName evidence="1">UPF0253 protein YaeP</fullName>
    </recommendedName>
</protein>
<comment type="similarity">
    <text evidence="1">Belongs to the UPF0253 family.</text>
</comment>
<proteinExistence type="inferred from homology"/>